<organism>
    <name type="scientific">Mycoplasma capricolum subsp. capricolum (strain California kid / ATCC 27343 / NCTC 10154)</name>
    <dbReference type="NCBI Taxonomy" id="340047"/>
    <lineage>
        <taxon>Bacteria</taxon>
        <taxon>Bacillati</taxon>
        <taxon>Mycoplasmatota</taxon>
        <taxon>Mollicutes</taxon>
        <taxon>Mycoplasmataceae</taxon>
        <taxon>Mycoplasma</taxon>
    </lineage>
</organism>
<dbReference type="EMBL" id="U51235">
    <property type="protein sequence ID" value="AAB09430.1"/>
    <property type="molecule type" value="Genomic_DNA"/>
</dbReference>
<dbReference type="EMBL" id="CP000123">
    <property type="protein sequence ID" value="ABC01504.1"/>
    <property type="molecule type" value="Genomic_DNA"/>
</dbReference>
<dbReference type="EMBL" id="Z33106">
    <property type="protein sequence ID" value="CAA83764.1"/>
    <property type="molecule type" value="Genomic_DNA"/>
</dbReference>
<dbReference type="PIR" id="S77870">
    <property type="entry name" value="S77870"/>
</dbReference>
<dbReference type="RefSeq" id="WP_011387254.1">
    <property type="nucleotide sequence ID" value="NC_007633.1"/>
</dbReference>
<dbReference type="SMR" id="Q2SSB0"/>
<dbReference type="GeneID" id="23778675"/>
<dbReference type="KEGG" id="mcp:MCAP_0369"/>
<dbReference type="HOGENOM" id="CLU_005965_2_4_14"/>
<dbReference type="PhylomeDB" id="Q2SSB0"/>
<dbReference type="Proteomes" id="UP000001928">
    <property type="component" value="Chromosome"/>
</dbReference>
<dbReference type="GO" id="GO:0005524">
    <property type="term" value="F:ATP binding"/>
    <property type="evidence" value="ECO:0007669"/>
    <property type="project" value="UniProtKB-UniRule"/>
</dbReference>
<dbReference type="GO" id="GO:0140662">
    <property type="term" value="F:ATP-dependent protein folding chaperone"/>
    <property type="evidence" value="ECO:0007669"/>
    <property type="project" value="InterPro"/>
</dbReference>
<dbReference type="GO" id="GO:0051082">
    <property type="term" value="F:unfolded protein binding"/>
    <property type="evidence" value="ECO:0007669"/>
    <property type="project" value="InterPro"/>
</dbReference>
<dbReference type="CDD" id="cd10234">
    <property type="entry name" value="ASKHA_NBD_HSP70_DnaK-like"/>
    <property type="match status" value="1"/>
</dbReference>
<dbReference type="FunFam" id="2.60.34.10:FF:000014">
    <property type="entry name" value="Chaperone protein DnaK HSP70"/>
    <property type="match status" value="1"/>
</dbReference>
<dbReference type="FunFam" id="3.30.420.40:FF:000071">
    <property type="entry name" value="Molecular chaperone DnaK"/>
    <property type="match status" value="1"/>
</dbReference>
<dbReference type="FunFam" id="3.90.640.10:FF:000003">
    <property type="entry name" value="Molecular chaperone DnaK"/>
    <property type="match status" value="1"/>
</dbReference>
<dbReference type="Gene3D" id="3.30.420.40">
    <property type="match status" value="2"/>
</dbReference>
<dbReference type="Gene3D" id="3.90.640.10">
    <property type="entry name" value="Actin, Chain A, domain 4"/>
    <property type="match status" value="1"/>
</dbReference>
<dbReference type="Gene3D" id="2.60.34.10">
    <property type="entry name" value="Substrate Binding Domain Of DNAk, Chain A, domain 1"/>
    <property type="match status" value="1"/>
</dbReference>
<dbReference type="HAMAP" id="MF_00332">
    <property type="entry name" value="DnaK"/>
    <property type="match status" value="1"/>
</dbReference>
<dbReference type="InterPro" id="IPR043129">
    <property type="entry name" value="ATPase_NBD"/>
</dbReference>
<dbReference type="InterPro" id="IPR012725">
    <property type="entry name" value="Chaperone_DnaK"/>
</dbReference>
<dbReference type="InterPro" id="IPR018181">
    <property type="entry name" value="Heat_shock_70_CS"/>
</dbReference>
<dbReference type="InterPro" id="IPR029047">
    <property type="entry name" value="HSP70_peptide-bd_sf"/>
</dbReference>
<dbReference type="InterPro" id="IPR013126">
    <property type="entry name" value="Hsp_70_fam"/>
</dbReference>
<dbReference type="NCBIfam" id="NF001413">
    <property type="entry name" value="PRK00290.1"/>
    <property type="match status" value="1"/>
</dbReference>
<dbReference type="NCBIfam" id="TIGR02350">
    <property type="entry name" value="prok_dnaK"/>
    <property type="match status" value="1"/>
</dbReference>
<dbReference type="PANTHER" id="PTHR19375">
    <property type="entry name" value="HEAT SHOCK PROTEIN 70KDA"/>
    <property type="match status" value="1"/>
</dbReference>
<dbReference type="Pfam" id="PF00012">
    <property type="entry name" value="HSP70"/>
    <property type="match status" value="2"/>
</dbReference>
<dbReference type="PRINTS" id="PR00301">
    <property type="entry name" value="HEATSHOCK70"/>
</dbReference>
<dbReference type="SUPFAM" id="SSF53067">
    <property type="entry name" value="Actin-like ATPase domain"/>
    <property type="match status" value="2"/>
</dbReference>
<dbReference type="SUPFAM" id="SSF100920">
    <property type="entry name" value="Heat shock protein 70kD (HSP70), peptide-binding domain"/>
    <property type="match status" value="1"/>
</dbReference>
<dbReference type="PROSITE" id="PS00297">
    <property type="entry name" value="HSP70_1"/>
    <property type="match status" value="1"/>
</dbReference>
<dbReference type="PROSITE" id="PS00329">
    <property type="entry name" value="HSP70_2"/>
    <property type="match status" value="1"/>
</dbReference>
<dbReference type="PROSITE" id="PS01036">
    <property type="entry name" value="HSP70_3"/>
    <property type="match status" value="1"/>
</dbReference>
<reference key="1">
    <citation type="journal article" date="1997" name="Int. J. Syst. Bacteriol.">
        <title>Phylogenetic analysis of mycoplasmas based on Hsp70 sequences: cloning of the dnaK (hsp70) gene region of Mycoplasma capricolum.</title>
        <authorList>
            <person name="Falah M."/>
            <person name="Gupta R.S."/>
        </authorList>
    </citation>
    <scope>NUCLEOTIDE SEQUENCE [GENOMIC DNA]</scope>
</reference>
<reference key="2">
    <citation type="submission" date="2005-09" db="EMBL/GenBank/DDBJ databases">
        <authorList>
            <person name="Glass J.I."/>
            <person name="Lartigue C."/>
            <person name="Pfannkoch C."/>
            <person name="Baden-Tillson H."/>
            <person name="Smith H.O."/>
            <person name="Venter J.C."/>
            <person name="Roske K."/>
            <person name="Wise K.S."/>
            <person name="Calcutt M.J."/>
            <person name="Nelson W.C."/>
            <person name="Nierman W.C."/>
        </authorList>
    </citation>
    <scope>NUCLEOTIDE SEQUENCE [LARGE SCALE GENOMIC DNA]</scope>
    <source>
        <strain>California kid / ATCC 27343 / NCTC 10154</strain>
    </source>
</reference>
<reference key="3">
    <citation type="journal article" date="1995" name="Mol. Microbiol.">
        <title>Exploring the Mycoplasma capricolum genome: a minimal cell reveals its physiology.</title>
        <authorList>
            <person name="Bork P."/>
            <person name="Ouzounis C."/>
            <person name="Casari G."/>
            <person name="Schneider R."/>
            <person name="Sander C."/>
            <person name="Dolan M."/>
            <person name="Gilbert W."/>
            <person name="Gillevet P.M."/>
        </authorList>
    </citation>
    <scope>NUCLEOTIDE SEQUENCE [GENOMIC DNA] OF 1-227</scope>
</reference>
<name>DNAK_MYCCT</name>
<evidence type="ECO:0000250" key="1"/>
<evidence type="ECO:0000256" key="2">
    <source>
        <dbReference type="SAM" id="MobiDB-lite"/>
    </source>
</evidence>
<evidence type="ECO:0000305" key="3"/>
<keyword id="KW-0067">ATP-binding</keyword>
<keyword id="KW-0143">Chaperone</keyword>
<keyword id="KW-0547">Nucleotide-binding</keyword>
<keyword id="KW-0597">Phosphoprotein</keyword>
<keyword id="KW-0346">Stress response</keyword>
<feature type="chain" id="PRO_0000228608" description="Chaperone protein DnaK">
    <location>
        <begin position="1"/>
        <end position="591"/>
    </location>
</feature>
<feature type="region of interest" description="Disordered" evidence="2">
    <location>
        <begin position="570"/>
        <end position="591"/>
    </location>
</feature>
<feature type="compositionally biased region" description="Low complexity" evidence="2">
    <location>
        <begin position="581"/>
        <end position="591"/>
    </location>
</feature>
<feature type="modified residue" description="Phosphothreonine; by autocatalysis" evidence="1">
    <location>
        <position position="175"/>
    </location>
</feature>
<accession>Q2SSB0</accession>
<accession>P0C177</accession>
<accession>P45958</accession>
<protein>
    <recommendedName>
        <fullName>Chaperone protein DnaK</fullName>
    </recommendedName>
    <alternativeName>
        <fullName>HSP70</fullName>
    </alternativeName>
    <alternativeName>
        <fullName>Heat shock 70 kDa protein</fullName>
    </alternativeName>
    <alternativeName>
        <fullName>Heat shock protein 70</fullName>
    </alternativeName>
</protein>
<sequence length="591" mass="63869">MAKEKIIGIDLGTTNSVVSVIEGGQPIILENPEGQRTTPSVVAFKNSDIIVGGAAKRQAVTNPNVVQSIKSKMGTTSKVNLEGKDYSPEQISAEILRYMKNYAEAKLGQKVTKAVITVPAYFNDAQRKATKDAGTIAGLQVERIINEPTAAALAYGLDKQDKEETILVYDLGGGTFDVSILAIGGGSFDVIATSGNNKLGGDNFDEEIIKWLLGKIKAEYNIDLSKEKMALQRLKDEAEKAKINLSSQLEVEINLPFIAMNESGPISFATTLTRSEFNKITKHLVDLTIQPVKDALSAAKKTPSEINEVLLVGGSTRIPAVQELVKSLLNKEPNRSINPDEVVAMGAAVQGGVLAGEVTDILLLDVTPLSLGIETMGGVMTKLIERNTTIPAKRTQIFSTATDNQPAVDINVLQGERAMAADNKSLGQFQLTGIQPAPRGIPQIEVTFEIDANGIVSVSAKDKNTNEEKTITISNSGNLSEAEVERMIKEAQENAANDEAKKKNIELKNKAENYINIIETSLLQAGDKISAEQKEQSQKMIDEIKELVKNENYEALEQKMAELEQAMAAAAEFANKHNDSDSNNNSSEQNN</sequence>
<gene>
    <name type="primary">dnaK</name>
    <name type="ordered locus">MCAP_0369</name>
</gene>
<proteinExistence type="inferred from homology"/>
<comment type="function">
    <text evidence="1">Acts as a chaperone.</text>
</comment>
<comment type="induction">
    <text evidence="1">By stress conditions e.g. heat shock (By similarity).</text>
</comment>
<comment type="similarity">
    <text evidence="3">Belongs to the heat shock protein 70 family.</text>
</comment>